<name>HFQ_ACTSZ</name>
<keyword id="KW-1185">Reference proteome</keyword>
<keyword id="KW-0694">RNA-binding</keyword>
<keyword id="KW-0346">Stress response</keyword>
<proteinExistence type="inferred from homology"/>
<evidence type="ECO:0000255" key="1">
    <source>
        <dbReference type="HAMAP-Rule" id="MF_00436"/>
    </source>
</evidence>
<evidence type="ECO:0000255" key="2">
    <source>
        <dbReference type="PROSITE-ProRule" id="PRU01346"/>
    </source>
</evidence>
<evidence type="ECO:0000256" key="3">
    <source>
        <dbReference type="SAM" id="MobiDB-lite"/>
    </source>
</evidence>
<sequence length="99" mass="11040">MAKGQSLQDPYLNALRRERIPVSIYLVNGIKLQGQIESFDQFVILLKNTVNQMVYKHAISTVVPARSVSHHNNNAQQQYQQQAAQAASAQSNETSSQAE</sequence>
<organism>
    <name type="scientific">Actinobacillus succinogenes (strain ATCC 55618 / DSM 22257 / CCUG 43843 / 130Z)</name>
    <dbReference type="NCBI Taxonomy" id="339671"/>
    <lineage>
        <taxon>Bacteria</taxon>
        <taxon>Pseudomonadati</taxon>
        <taxon>Pseudomonadota</taxon>
        <taxon>Gammaproteobacteria</taxon>
        <taxon>Pasteurellales</taxon>
        <taxon>Pasteurellaceae</taxon>
        <taxon>Actinobacillus</taxon>
    </lineage>
</organism>
<reference key="1">
    <citation type="journal article" date="2010" name="BMC Genomics">
        <title>A genomic perspective on the potential of Actinobacillus succinogenes for industrial succinate production.</title>
        <authorList>
            <person name="McKinlay J.B."/>
            <person name="Laivenieks M."/>
            <person name="Schindler B.D."/>
            <person name="McKinlay A.A."/>
            <person name="Siddaramappa S."/>
            <person name="Challacombe J.F."/>
            <person name="Lowry S.R."/>
            <person name="Clum A."/>
            <person name="Lapidus A.L."/>
            <person name="Burkhart K.B."/>
            <person name="Harkins V."/>
            <person name="Vieille C."/>
        </authorList>
    </citation>
    <scope>NUCLEOTIDE SEQUENCE [LARGE SCALE GENOMIC DNA]</scope>
    <source>
        <strain>ATCC 55618 / DSM 22257 / CCUG 43843 / 130Z</strain>
    </source>
</reference>
<feature type="chain" id="PRO_1000072328" description="RNA-binding protein Hfq">
    <location>
        <begin position="1"/>
        <end position="99"/>
    </location>
</feature>
<feature type="domain" description="Sm" evidence="2">
    <location>
        <begin position="9"/>
        <end position="68"/>
    </location>
</feature>
<feature type="region of interest" description="Disordered" evidence="3">
    <location>
        <begin position="67"/>
        <end position="99"/>
    </location>
</feature>
<feature type="compositionally biased region" description="Low complexity" evidence="3">
    <location>
        <begin position="72"/>
        <end position="99"/>
    </location>
</feature>
<accession>A6VN08</accession>
<comment type="function">
    <text evidence="1">RNA chaperone that binds small regulatory RNA (sRNAs) and mRNAs to facilitate mRNA translational regulation in response to envelope stress, environmental stress and changes in metabolite concentrations. Also binds with high specificity to tRNAs.</text>
</comment>
<comment type="subunit">
    <text evidence="1">Homohexamer.</text>
</comment>
<comment type="similarity">
    <text evidence="1">Belongs to the Hfq family.</text>
</comment>
<protein>
    <recommendedName>
        <fullName evidence="1">RNA-binding protein Hfq</fullName>
    </recommendedName>
</protein>
<gene>
    <name evidence="1" type="primary">hfq</name>
    <name type="ordered locus">Asuc_0987</name>
</gene>
<dbReference type="EMBL" id="CP000746">
    <property type="protein sequence ID" value="ABR74355.1"/>
    <property type="molecule type" value="Genomic_DNA"/>
</dbReference>
<dbReference type="RefSeq" id="WP_012072732.1">
    <property type="nucleotide sequence ID" value="NC_009655.1"/>
</dbReference>
<dbReference type="SMR" id="A6VN08"/>
<dbReference type="STRING" id="339671.Asuc_0987"/>
<dbReference type="KEGG" id="asu:Asuc_0987"/>
<dbReference type="eggNOG" id="COG1923">
    <property type="taxonomic scope" value="Bacteria"/>
</dbReference>
<dbReference type="HOGENOM" id="CLU_113688_2_2_6"/>
<dbReference type="OrthoDB" id="9799751at2"/>
<dbReference type="Proteomes" id="UP000001114">
    <property type="component" value="Chromosome"/>
</dbReference>
<dbReference type="GO" id="GO:0005829">
    <property type="term" value="C:cytosol"/>
    <property type="evidence" value="ECO:0007669"/>
    <property type="project" value="TreeGrafter"/>
</dbReference>
<dbReference type="GO" id="GO:0003723">
    <property type="term" value="F:RNA binding"/>
    <property type="evidence" value="ECO:0007669"/>
    <property type="project" value="UniProtKB-UniRule"/>
</dbReference>
<dbReference type="GO" id="GO:0006355">
    <property type="term" value="P:regulation of DNA-templated transcription"/>
    <property type="evidence" value="ECO:0007669"/>
    <property type="project" value="InterPro"/>
</dbReference>
<dbReference type="GO" id="GO:0043487">
    <property type="term" value="P:regulation of RNA stability"/>
    <property type="evidence" value="ECO:0007669"/>
    <property type="project" value="TreeGrafter"/>
</dbReference>
<dbReference type="GO" id="GO:0045974">
    <property type="term" value="P:regulation of translation, ncRNA-mediated"/>
    <property type="evidence" value="ECO:0007669"/>
    <property type="project" value="TreeGrafter"/>
</dbReference>
<dbReference type="CDD" id="cd01716">
    <property type="entry name" value="Hfq"/>
    <property type="match status" value="1"/>
</dbReference>
<dbReference type="FunFam" id="2.30.30.100:FF:000001">
    <property type="entry name" value="RNA-binding protein Hfq"/>
    <property type="match status" value="1"/>
</dbReference>
<dbReference type="Gene3D" id="2.30.30.100">
    <property type="match status" value="1"/>
</dbReference>
<dbReference type="HAMAP" id="MF_00436">
    <property type="entry name" value="Hfq"/>
    <property type="match status" value="1"/>
</dbReference>
<dbReference type="InterPro" id="IPR005001">
    <property type="entry name" value="Hfq"/>
</dbReference>
<dbReference type="InterPro" id="IPR010920">
    <property type="entry name" value="LSM_dom_sf"/>
</dbReference>
<dbReference type="InterPro" id="IPR047575">
    <property type="entry name" value="Sm"/>
</dbReference>
<dbReference type="NCBIfam" id="TIGR02383">
    <property type="entry name" value="Hfq"/>
    <property type="match status" value="1"/>
</dbReference>
<dbReference type="NCBIfam" id="NF001602">
    <property type="entry name" value="PRK00395.1"/>
    <property type="match status" value="1"/>
</dbReference>
<dbReference type="PANTHER" id="PTHR34772">
    <property type="entry name" value="RNA-BINDING PROTEIN HFQ"/>
    <property type="match status" value="1"/>
</dbReference>
<dbReference type="PANTHER" id="PTHR34772:SF1">
    <property type="entry name" value="RNA-BINDING PROTEIN HFQ"/>
    <property type="match status" value="1"/>
</dbReference>
<dbReference type="Pfam" id="PF17209">
    <property type="entry name" value="Hfq"/>
    <property type="match status" value="1"/>
</dbReference>
<dbReference type="SUPFAM" id="SSF50182">
    <property type="entry name" value="Sm-like ribonucleoproteins"/>
    <property type="match status" value="1"/>
</dbReference>
<dbReference type="PROSITE" id="PS52002">
    <property type="entry name" value="SM"/>
    <property type="match status" value="1"/>
</dbReference>